<evidence type="ECO:0000255" key="1">
    <source>
        <dbReference type="HAMAP-Rule" id="MF_00384"/>
    </source>
</evidence>
<dbReference type="EC" id="2.7.1.39" evidence="1"/>
<dbReference type="EMBL" id="AE008691">
    <property type="protein sequence ID" value="AAM25738.1"/>
    <property type="molecule type" value="Genomic_DNA"/>
</dbReference>
<dbReference type="RefSeq" id="WP_011026613.1">
    <property type="nucleotide sequence ID" value="NC_003869.1"/>
</dbReference>
<dbReference type="SMR" id="Q8R711"/>
<dbReference type="STRING" id="273068.TTE2618"/>
<dbReference type="KEGG" id="tte:TTE2618"/>
<dbReference type="eggNOG" id="COG0083">
    <property type="taxonomic scope" value="Bacteria"/>
</dbReference>
<dbReference type="HOGENOM" id="CLU_041243_0_2_9"/>
<dbReference type="OrthoDB" id="9769912at2"/>
<dbReference type="UniPathway" id="UPA00050">
    <property type="reaction ID" value="UER00064"/>
</dbReference>
<dbReference type="Proteomes" id="UP000000555">
    <property type="component" value="Chromosome"/>
</dbReference>
<dbReference type="GO" id="GO:0005737">
    <property type="term" value="C:cytoplasm"/>
    <property type="evidence" value="ECO:0007669"/>
    <property type="project" value="UniProtKB-SubCell"/>
</dbReference>
<dbReference type="GO" id="GO:0005524">
    <property type="term" value="F:ATP binding"/>
    <property type="evidence" value="ECO:0007669"/>
    <property type="project" value="UniProtKB-UniRule"/>
</dbReference>
<dbReference type="GO" id="GO:0004413">
    <property type="term" value="F:homoserine kinase activity"/>
    <property type="evidence" value="ECO:0007669"/>
    <property type="project" value="UniProtKB-UniRule"/>
</dbReference>
<dbReference type="GO" id="GO:0009088">
    <property type="term" value="P:threonine biosynthetic process"/>
    <property type="evidence" value="ECO:0007669"/>
    <property type="project" value="UniProtKB-UniRule"/>
</dbReference>
<dbReference type="Gene3D" id="3.30.230.10">
    <property type="match status" value="1"/>
</dbReference>
<dbReference type="Gene3D" id="3.30.70.890">
    <property type="entry name" value="GHMP kinase, C-terminal domain"/>
    <property type="match status" value="1"/>
</dbReference>
<dbReference type="HAMAP" id="MF_00384">
    <property type="entry name" value="Homoser_kinase"/>
    <property type="match status" value="1"/>
</dbReference>
<dbReference type="InterPro" id="IPR013750">
    <property type="entry name" value="GHMP_kinase_C_dom"/>
</dbReference>
<dbReference type="InterPro" id="IPR036554">
    <property type="entry name" value="GHMP_kinase_C_sf"/>
</dbReference>
<dbReference type="InterPro" id="IPR006204">
    <property type="entry name" value="GHMP_kinase_N_dom"/>
</dbReference>
<dbReference type="InterPro" id="IPR006203">
    <property type="entry name" value="GHMP_knse_ATP-bd_CS"/>
</dbReference>
<dbReference type="InterPro" id="IPR000870">
    <property type="entry name" value="Homoserine_kinase"/>
</dbReference>
<dbReference type="InterPro" id="IPR020568">
    <property type="entry name" value="Ribosomal_Su5_D2-typ_SF"/>
</dbReference>
<dbReference type="InterPro" id="IPR014721">
    <property type="entry name" value="Ribsml_uS5_D2-typ_fold_subgr"/>
</dbReference>
<dbReference type="NCBIfam" id="NF002288">
    <property type="entry name" value="PRK01212.1-4"/>
    <property type="match status" value="1"/>
</dbReference>
<dbReference type="NCBIfam" id="TIGR00191">
    <property type="entry name" value="thrB"/>
    <property type="match status" value="1"/>
</dbReference>
<dbReference type="PANTHER" id="PTHR20861:SF1">
    <property type="entry name" value="HOMOSERINE KINASE"/>
    <property type="match status" value="1"/>
</dbReference>
<dbReference type="PANTHER" id="PTHR20861">
    <property type="entry name" value="HOMOSERINE/4-DIPHOSPHOCYTIDYL-2-C-METHYL-D-ERYTHRITOL KINASE"/>
    <property type="match status" value="1"/>
</dbReference>
<dbReference type="Pfam" id="PF08544">
    <property type="entry name" value="GHMP_kinases_C"/>
    <property type="match status" value="1"/>
</dbReference>
<dbReference type="Pfam" id="PF00288">
    <property type="entry name" value="GHMP_kinases_N"/>
    <property type="match status" value="1"/>
</dbReference>
<dbReference type="PIRSF" id="PIRSF000676">
    <property type="entry name" value="Homoser_kin"/>
    <property type="match status" value="1"/>
</dbReference>
<dbReference type="PRINTS" id="PR00958">
    <property type="entry name" value="HOMSERKINASE"/>
</dbReference>
<dbReference type="SUPFAM" id="SSF55060">
    <property type="entry name" value="GHMP Kinase, C-terminal domain"/>
    <property type="match status" value="1"/>
</dbReference>
<dbReference type="SUPFAM" id="SSF54211">
    <property type="entry name" value="Ribosomal protein S5 domain 2-like"/>
    <property type="match status" value="1"/>
</dbReference>
<dbReference type="PROSITE" id="PS00627">
    <property type="entry name" value="GHMP_KINASES_ATP"/>
    <property type="match status" value="1"/>
</dbReference>
<comment type="function">
    <text evidence="1">Catalyzes the ATP-dependent phosphorylation of L-homoserine to L-homoserine phosphate.</text>
</comment>
<comment type="catalytic activity">
    <reaction evidence="1">
        <text>L-homoserine + ATP = O-phospho-L-homoserine + ADP + H(+)</text>
        <dbReference type="Rhea" id="RHEA:13985"/>
        <dbReference type="ChEBI" id="CHEBI:15378"/>
        <dbReference type="ChEBI" id="CHEBI:30616"/>
        <dbReference type="ChEBI" id="CHEBI:57476"/>
        <dbReference type="ChEBI" id="CHEBI:57590"/>
        <dbReference type="ChEBI" id="CHEBI:456216"/>
        <dbReference type="EC" id="2.7.1.39"/>
    </reaction>
</comment>
<comment type="pathway">
    <text evidence="1">Amino-acid biosynthesis; L-threonine biosynthesis; L-threonine from L-aspartate: step 4/5.</text>
</comment>
<comment type="subcellular location">
    <subcellularLocation>
        <location evidence="1">Cytoplasm</location>
    </subcellularLocation>
</comment>
<comment type="similarity">
    <text evidence="1">Belongs to the GHMP kinase family. Homoserine kinase subfamily.</text>
</comment>
<protein>
    <recommendedName>
        <fullName evidence="1">Homoserine kinase</fullName>
        <shortName evidence="1">HK</shortName>
        <shortName evidence="1">HSK</shortName>
        <ecNumber evidence="1">2.7.1.39</ecNumber>
    </recommendedName>
</protein>
<sequence>MDSDMSGGMVKVMVPASTANLGPGFDVLGVALNLYTEISMEFIKDGLEIFVEGEGVEDIENDQNNLIYKSAEVIFKKIGVFNKGLRIKIKNEIPLGRGLGSSAAAIVGGLLAANELTGRVLKREEILNLAALIEGHADNVTAALNGGLNVSIFDKNKVYYARKALEDDIDFLAFVPQEMVRTEIARKVLPEKVDFNDAVFNTGRTAFLVSVLIEKKYELLKIATQDMLHQKYRAKLVPFMEECFEKALLAGAYAAFLSGAGPTIMAISSPENSERVLKEVGKVYEERGLSYRAYRLKCENNGAQVLKTPSFV</sequence>
<organism>
    <name type="scientific">Caldanaerobacter subterraneus subsp. tengcongensis (strain DSM 15242 / JCM 11007 / NBRC 100824 / MB4)</name>
    <name type="common">Thermoanaerobacter tengcongensis</name>
    <dbReference type="NCBI Taxonomy" id="273068"/>
    <lineage>
        <taxon>Bacteria</taxon>
        <taxon>Bacillati</taxon>
        <taxon>Bacillota</taxon>
        <taxon>Clostridia</taxon>
        <taxon>Thermoanaerobacterales</taxon>
        <taxon>Thermoanaerobacteraceae</taxon>
        <taxon>Caldanaerobacter</taxon>
    </lineage>
</organism>
<accession>Q8R711</accession>
<keyword id="KW-0028">Amino-acid biosynthesis</keyword>
<keyword id="KW-0067">ATP-binding</keyword>
<keyword id="KW-0963">Cytoplasm</keyword>
<keyword id="KW-0418">Kinase</keyword>
<keyword id="KW-0547">Nucleotide-binding</keyword>
<keyword id="KW-1185">Reference proteome</keyword>
<keyword id="KW-0791">Threonine biosynthesis</keyword>
<keyword id="KW-0808">Transferase</keyword>
<feature type="chain" id="PRO_0000156627" description="Homoserine kinase">
    <location>
        <begin position="1"/>
        <end position="312"/>
    </location>
</feature>
<feature type="binding site" evidence="1">
    <location>
        <begin position="94"/>
        <end position="104"/>
    </location>
    <ligand>
        <name>ATP</name>
        <dbReference type="ChEBI" id="CHEBI:30616"/>
    </ligand>
</feature>
<proteinExistence type="inferred from homology"/>
<reference key="1">
    <citation type="journal article" date="2002" name="Genome Res.">
        <title>A complete sequence of the T. tengcongensis genome.</title>
        <authorList>
            <person name="Bao Q."/>
            <person name="Tian Y."/>
            <person name="Li W."/>
            <person name="Xu Z."/>
            <person name="Xuan Z."/>
            <person name="Hu S."/>
            <person name="Dong W."/>
            <person name="Yang J."/>
            <person name="Chen Y."/>
            <person name="Xue Y."/>
            <person name="Xu Y."/>
            <person name="Lai X."/>
            <person name="Huang L."/>
            <person name="Dong X."/>
            <person name="Ma Y."/>
            <person name="Ling L."/>
            <person name="Tan H."/>
            <person name="Chen R."/>
            <person name="Wang J."/>
            <person name="Yu J."/>
            <person name="Yang H."/>
        </authorList>
    </citation>
    <scope>NUCLEOTIDE SEQUENCE [LARGE SCALE GENOMIC DNA]</scope>
    <source>
        <strain>DSM 15242 / JCM 11007 / NBRC 100824 / MB4</strain>
    </source>
</reference>
<name>KHSE_CALS4</name>
<gene>
    <name evidence="1" type="primary">thrB</name>
    <name type="ordered locus">TTE2618</name>
</gene>